<evidence type="ECO:0000250" key="1">
    <source>
        <dbReference type="UniProtKB" id="Q5BA83"/>
    </source>
</evidence>
<evidence type="ECO:0000255" key="2"/>
<evidence type="ECO:0000255" key="3">
    <source>
        <dbReference type="PROSITE-ProRule" id="PRU00258"/>
    </source>
</evidence>
<evidence type="ECO:0000255" key="4">
    <source>
        <dbReference type="PROSITE-ProRule" id="PRU01348"/>
    </source>
</evidence>
<evidence type="ECO:0000255" key="5">
    <source>
        <dbReference type="PROSITE-ProRule" id="PRU01363"/>
    </source>
</evidence>
<evidence type="ECO:0000256" key="6">
    <source>
        <dbReference type="SAM" id="MobiDB-lite"/>
    </source>
</evidence>
<evidence type="ECO:0000269" key="7">
    <source>
    </source>
</evidence>
<evidence type="ECO:0000269" key="8">
    <source>
    </source>
</evidence>
<evidence type="ECO:0000269" key="9">
    <source>
    </source>
</evidence>
<evidence type="ECO:0000269" key="10">
    <source>
    </source>
</evidence>
<evidence type="ECO:0000303" key="11">
    <source>
    </source>
</evidence>
<evidence type="ECO:0000305" key="12">
    <source>
    </source>
</evidence>
<reference key="1">
    <citation type="journal article" date="2011" name="Genome Biol.">
        <title>Genome sequence of the insect pathogenic fungus Cordyceps militaris, a valued traditional Chinese medicine.</title>
        <authorList>
            <person name="Zheng P."/>
            <person name="Xia Y."/>
            <person name="Xiao G."/>
            <person name="Xiong C."/>
            <person name="Hu X."/>
            <person name="Zhang S."/>
            <person name="Zheng H."/>
            <person name="Huang Y."/>
            <person name="Zhou Y."/>
            <person name="Wang S."/>
            <person name="Zhao G.-P."/>
            <person name="Liu X."/>
            <person name="St Leger R.J."/>
            <person name="Wang C."/>
        </authorList>
    </citation>
    <scope>NUCLEOTIDE SEQUENCE [LARGE SCALE GENOMIC DNA]</scope>
    <source>
        <strain>CM01</strain>
    </source>
</reference>
<reference key="2">
    <citation type="journal article" date="2004" name="Proc. Natl. Acad. Sci. U.S.A.">
        <title>Antiatherogenic activity of fungal beauveriolides, inhibitors of lipid droplet accumulation in macrophages.</title>
        <authorList>
            <person name="Namatame I."/>
            <person name="Tomoda H."/>
            <person name="Ishibashi S."/>
            <person name="Omura S."/>
        </authorList>
    </citation>
    <scope>BIOTECHNOLOGY</scope>
</reference>
<reference key="3">
    <citation type="journal article" date="2009" name="ChemBioChem">
        <title>The natural products beauveriolide I and III: a new class of beta-amyloid-lowering compounds.</title>
        <authorList>
            <person name="Witter D.P."/>
            <person name="Chen Y."/>
            <person name="Rogel J.K."/>
            <person name="Boldt G.E."/>
            <person name="Wentworth P. Jr."/>
        </authorList>
    </citation>
    <scope>BIOTECHNOLOGY</scope>
</reference>
<reference key="4">
    <citation type="journal article" date="2009" name="Chem. Pharm. Bull.">
        <title>The selectivity of beauveriolide derivatives in inhibition toward the two isozymes of acyl-CoA: cholesterol acyltransferase.</title>
        <authorList>
            <person name="Ohshiro T."/>
            <person name="Matsuda D."/>
            <person name="Nagai K."/>
            <person name="Doi T."/>
            <person name="Sunazuka T."/>
            <person name="Takahashi T."/>
            <person name="Rudel L.L."/>
            <person name="Omura S."/>
            <person name="Tomoda H."/>
        </authorList>
    </citation>
    <scope>BIOTECHNOLOGY</scope>
</reference>
<reference key="5">
    <citation type="journal article" date="2020" name="J. Biotechnol.">
        <title>Genome mining and biosynthesis of the Acyl-CoA:cholesterol acyltransferase inhibitor beauveriolide I and III in Cordyceps militaris.</title>
        <authorList>
            <person name="Wang X."/>
            <person name="Gao Y.L."/>
            <person name="Zhang M.L."/>
            <person name="Zhang H.D."/>
            <person name="Huang J.Z."/>
            <person name="Li L."/>
        </authorList>
    </citation>
    <scope>FUNCTION</scope>
    <scope>DOMAIN</scope>
    <scope>PATHWAY</scope>
</reference>
<accession>G3J453</accession>
<feature type="chain" id="PRO_0000449817" description="Highly reducing polyketide synthase cm3B">
    <location>
        <begin position="1"/>
        <end position="2525"/>
    </location>
</feature>
<feature type="domain" description="Ketosynthase family 3 (KS3)" evidence="4">
    <location>
        <begin position="29"/>
        <end position="450"/>
    </location>
</feature>
<feature type="domain" description="PKS/mFAS DH" evidence="5">
    <location>
        <begin position="949"/>
        <end position="1257"/>
    </location>
</feature>
<feature type="domain" description="Carrier" evidence="3">
    <location>
        <begin position="2411"/>
        <end position="2489"/>
    </location>
</feature>
<feature type="region of interest" description="Disordered" evidence="6">
    <location>
        <begin position="1"/>
        <end position="29"/>
    </location>
</feature>
<feature type="region of interest" description="Malonyl-CoA:ACP transacylase (MAT) domain" evidence="1 2">
    <location>
        <begin position="560"/>
        <end position="895"/>
    </location>
</feature>
<feature type="region of interest" description="Dehydratase (DH) domain" evidence="1 2">
    <location>
        <begin position="949"/>
        <end position="1252"/>
    </location>
</feature>
<feature type="region of interest" description="N-terminal hotdog fold" evidence="5">
    <location>
        <begin position="949"/>
        <end position="1087"/>
    </location>
</feature>
<feature type="region of interest" description="C-terminal hotdog fold" evidence="5">
    <location>
        <begin position="1107"/>
        <end position="1257"/>
    </location>
</feature>
<feature type="region of interest" description="Methyltransferase (CMet) domain" evidence="1 2">
    <location>
        <begin position="1399"/>
        <end position="1504"/>
    </location>
</feature>
<feature type="region of interest" description="Enoyl reductase (ER) domain" evidence="1 2">
    <location>
        <begin position="1799"/>
        <end position="2111"/>
    </location>
</feature>
<feature type="region of interest" description="Ketoreductase (KR) domain" evidence="1 2">
    <location>
        <begin position="2411"/>
        <end position="2489"/>
    </location>
</feature>
<feature type="compositionally biased region" description="Polar residues" evidence="6">
    <location>
        <begin position="1"/>
        <end position="10"/>
    </location>
</feature>
<feature type="active site" description="For beta-ketoacyl synthase activity" evidence="4">
    <location>
        <position position="202"/>
    </location>
</feature>
<feature type="active site" description="For beta-ketoacyl synthase activity" evidence="4">
    <location>
        <position position="336"/>
    </location>
</feature>
<feature type="active site" description="For beta-ketoacyl synthase activity" evidence="4">
    <location>
        <position position="376"/>
    </location>
</feature>
<feature type="active site" description="Proton acceptor; for dehydratase activity" evidence="5">
    <location>
        <position position="981"/>
    </location>
</feature>
<feature type="active site" description="Proton donor; for dehydratase activity" evidence="5">
    <location>
        <position position="1169"/>
    </location>
</feature>
<feature type="modified residue" description="O-(pantetheine 4'-phosphoryl)serine" evidence="3">
    <location>
        <position position="2449"/>
    </location>
</feature>
<name>CM3B_CORMM</name>
<gene>
    <name evidence="11" type="primary">cm3B</name>
    <name type="ORF">CCM_01282</name>
</gene>
<protein>
    <recommendedName>
        <fullName evidence="11">Highly reducing polyketide synthase cm3B</fullName>
        <shortName evidence="11">HR-PKS cm3B</shortName>
        <ecNumber evidence="12">2.3.1.-</ecNumber>
    </recommendedName>
    <alternativeName>
        <fullName evidence="11">Beauveriolides biosynthesis cluster protein B</fullName>
    </alternativeName>
    <alternativeName>
        <fullName evidence="11">Cyclodepsipeptides cm3 biosynthesis cluster protein B</fullName>
    </alternativeName>
</protein>
<dbReference type="EC" id="2.3.1.-" evidence="12"/>
<dbReference type="EMBL" id="JH126399">
    <property type="protein sequence ID" value="EGX96624.1"/>
    <property type="molecule type" value="Genomic_DNA"/>
</dbReference>
<dbReference type="RefSeq" id="XP_006666501.1">
    <property type="nucleotide sequence ID" value="XM_006666438.1"/>
</dbReference>
<dbReference type="SMR" id="G3J453"/>
<dbReference type="STRING" id="983644.G3J453"/>
<dbReference type="GeneID" id="18163313"/>
<dbReference type="KEGG" id="cmt:CCM_01282"/>
<dbReference type="VEuPathDB" id="FungiDB:CCM_01282"/>
<dbReference type="eggNOG" id="KOG1202">
    <property type="taxonomic scope" value="Eukaryota"/>
</dbReference>
<dbReference type="HOGENOM" id="CLU_000022_31_0_1"/>
<dbReference type="InParanoid" id="G3J453"/>
<dbReference type="OMA" id="RNWIGAY"/>
<dbReference type="OrthoDB" id="329835at2759"/>
<dbReference type="Proteomes" id="UP000001610">
    <property type="component" value="Unassembled WGS sequence"/>
</dbReference>
<dbReference type="GO" id="GO:0004315">
    <property type="term" value="F:3-oxoacyl-[acyl-carrier-protein] synthase activity"/>
    <property type="evidence" value="ECO:0007669"/>
    <property type="project" value="InterPro"/>
</dbReference>
<dbReference type="GO" id="GO:0004312">
    <property type="term" value="F:fatty acid synthase activity"/>
    <property type="evidence" value="ECO:0007669"/>
    <property type="project" value="TreeGrafter"/>
</dbReference>
<dbReference type="GO" id="GO:0008168">
    <property type="term" value="F:methyltransferase activity"/>
    <property type="evidence" value="ECO:0007669"/>
    <property type="project" value="UniProtKB-KW"/>
</dbReference>
<dbReference type="GO" id="GO:0016491">
    <property type="term" value="F:oxidoreductase activity"/>
    <property type="evidence" value="ECO:0007669"/>
    <property type="project" value="UniProtKB-KW"/>
</dbReference>
<dbReference type="GO" id="GO:0031177">
    <property type="term" value="F:phosphopantetheine binding"/>
    <property type="evidence" value="ECO:0007669"/>
    <property type="project" value="InterPro"/>
</dbReference>
<dbReference type="GO" id="GO:0006633">
    <property type="term" value="P:fatty acid biosynthetic process"/>
    <property type="evidence" value="ECO:0007669"/>
    <property type="project" value="InterPro"/>
</dbReference>
<dbReference type="GO" id="GO:0032259">
    <property type="term" value="P:methylation"/>
    <property type="evidence" value="ECO:0007669"/>
    <property type="project" value="UniProtKB-KW"/>
</dbReference>
<dbReference type="GO" id="GO:0044550">
    <property type="term" value="P:secondary metabolite biosynthetic process"/>
    <property type="evidence" value="ECO:0007669"/>
    <property type="project" value="UniProtKB-ARBA"/>
</dbReference>
<dbReference type="CDD" id="cd02440">
    <property type="entry name" value="AdoMet_MTases"/>
    <property type="match status" value="1"/>
</dbReference>
<dbReference type="CDD" id="cd05195">
    <property type="entry name" value="enoyl_red"/>
    <property type="match status" value="1"/>
</dbReference>
<dbReference type="CDD" id="cd00833">
    <property type="entry name" value="PKS"/>
    <property type="match status" value="1"/>
</dbReference>
<dbReference type="FunFam" id="3.40.50.720:FF:000209">
    <property type="entry name" value="Polyketide synthase Pks12"/>
    <property type="match status" value="1"/>
</dbReference>
<dbReference type="Gene3D" id="3.30.70.3290">
    <property type="match status" value="1"/>
</dbReference>
<dbReference type="Gene3D" id="3.40.47.10">
    <property type="match status" value="1"/>
</dbReference>
<dbReference type="Gene3D" id="1.10.1200.10">
    <property type="entry name" value="ACP-like"/>
    <property type="match status" value="1"/>
</dbReference>
<dbReference type="Gene3D" id="3.40.366.10">
    <property type="entry name" value="Malonyl-Coenzyme A Acyl Carrier Protein, domain 2"/>
    <property type="match status" value="1"/>
</dbReference>
<dbReference type="Gene3D" id="3.90.180.10">
    <property type="entry name" value="Medium-chain alcohol dehydrogenases, catalytic domain"/>
    <property type="match status" value="1"/>
</dbReference>
<dbReference type="Gene3D" id="3.40.50.720">
    <property type="entry name" value="NAD(P)-binding Rossmann-like Domain"/>
    <property type="match status" value="1"/>
</dbReference>
<dbReference type="Gene3D" id="3.10.129.110">
    <property type="entry name" value="Polyketide synthase dehydratase"/>
    <property type="match status" value="1"/>
</dbReference>
<dbReference type="Gene3D" id="3.40.50.150">
    <property type="entry name" value="Vaccinia Virus protein VP39"/>
    <property type="match status" value="1"/>
</dbReference>
<dbReference type="InterPro" id="IPR001227">
    <property type="entry name" value="Ac_transferase_dom_sf"/>
</dbReference>
<dbReference type="InterPro" id="IPR036736">
    <property type="entry name" value="ACP-like_sf"/>
</dbReference>
<dbReference type="InterPro" id="IPR014043">
    <property type="entry name" value="Acyl_transferase_dom"/>
</dbReference>
<dbReference type="InterPro" id="IPR016035">
    <property type="entry name" value="Acyl_Trfase/lysoPLipase"/>
</dbReference>
<dbReference type="InterPro" id="IPR013154">
    <property type="entry name" value="ADH-like_N"/>
</dbReference>
<dbReference type="InterPro" id="IPR011032">
    <property type="entry name" value="GroES-like_sf"/>
</dbReference>
<dbReference type="InterPro" id="IPR018201">
    <property type="entry name" value="Ketoacyl_synth_AS"/>
</dbReference>
<dbReference type="InterPro" id="IPR014031">
    <property type="entry name" value="Ketoacyl_synth_C"/>
</dbReference>
<dbReference type="InterPro" id="IPR014030">
    <property type="entry name" value="Ketoacyl_synth_N"/>
</dbReference>
<dbReference type="InterPro" id="IPR016036">
    <property type="entry name" value="Malonyl_transacylase_ACP-bd"/>
</dbReference>
<dbReference type="InterPro" id="IPR013217">
    <property type="entry name" value="Methyltransf_12"/>
</dbReference>
<dbReference type="InterPro" id="IPR036291">
    <property type="entry name" value="NAD(P)-bd_dom_sf"/>
</dbReference>
<dbReference type="InterPro" id="IPR032821">
    <property type="entry name" value="PKS_assoc"/>
</dbReference>
<dbReference type="InterPro" id="IPR020841">
    <property type="entry name" value="PKS_Beta-ketoAc_synthase_dom"/>
</dbReference>
<dbReference type="InterPro" id="IPR042104">
    <property type="entry name" value="PKS_dehydratase_sf"/>
</dbReference>
<dbReference type="InterPro" id="IPR020807">
    <property type="entry name" value="PKS_DH"/>
</dbReference>
<dbReference type="InterPro" id="IPR049551">
    <property type="entry name" value="PKS_DH_C"/>
</dbReference>
<dbReference type="InterPro" id="IPR049552">
    <property type="entry name" value="PKS_DH_N"/>
</dbReference>
<dbReference type="InterPro" id="IPR020843">
    <property type="entry name" value="PKS_ER"/>
</dbReference>
<dbReference type="InterPro" id="IPR013968">
    <property type="entry name" value="PKS_KR"/>
</dbReference>
<dbReference type="InterPro" id="IPR049900">
    <property type="entry name" value="PKS_mFAS_DH"/>
</dbReference>
<dbReference type="InterPro" id="IPR050091">
    <property type="entry name" value="PKS_NRPS_Biosynth_Enz"/>
</dbReference>
<dbReference type="InterPro" id="IPR020806">
    <property type="entry name" value="PKS_PP-bd"/>
</dbReference>
<dbReference type="InterPro" id="IPR009081">
    <property type="entry name" value="PP-bd_ACP"/>
</dbReference>
<dbReference type="InterPro" id="IPR006162">
    <property type="entry name" value="Ppantetheine_attach_site"/>
</dbReference>
<dbReference type="InterPro" id="IPR029063">
    <property type="entry name" value="SAM-dependent_MTases_sf"/>
</dbReference>
<dbReference type="InterPro" id="IPR016039">
    <property type="entry name" value="Thiolase-like"/>
</dbReference>
<dbReference type="PANTHER" id="PTHR43775:SF29">
    <property type="entry name" value="ASPERFURANONE POLYKETIDE SYNTHASE AFOG-RELATED"/>
    <property type="match status" value="1"/>
</dbReference>
<dbReference type="PANTHER" id="PTHR43775">
    <property type="entry name" value="FATTY ACID SYNTHASE"/>
    <property type="match status" value="1"/>
</dbReference>
<dbReference type="Pfam" id="PF23297">
    <property type="entry name" value="ACP_SdgA_C"/>
    <property type="match status" value="1"/>
</dbReference>
<dbReference type="Pfam" id="PF00698">
    <property type="entry name" value="Acyl_transf_1"/>
    <property type="match status" value="1"/>
</dbReference>
<dbReference type="Pfam" id="PF08240">
    <property type="entry name" value="ADH_N"/>
    <property type="match status" value="1"/>
</dbReference>
<dbReference type="Pfam" id="PF13602">
    <property type="entry name" value="ADH_zinc_N_2"/>
    <property type="match status" value="1"/>
</dbReference>
<dbReference type="Pfam" id="PF16197">
    <property type="entry name" value="KAsynt_C_assoc"/>
    <property type="match status" value="1"/>
</dbReference>
<dbReference type="Pfam" id="PF00109">
    <property type="entry name" value="ketoacyl-synt"/>
    <property type="match status" value="1"/>
</dbReference>
<dbReference type="Pfam" id="PF02801">
    <property type="entry name" value="Ketoacyl-synt_C"/>
    <property type="match status" value="1"/>
</dbReference>
<dbReference type="Pfam" id="PF08659">
    <property type="entry name" value="KR"/>
    <property type="match status" value="1"/>
</dbReference>
<dbReference type="Pfam" id="PF08242">
    <property type="entry name" value="Methyltransf_12"/>
    <property type="match status" value="1"/>
</dbReference>
<dbReference type="Pfam" id="PF21089">
    <property type="entry name" value="PKS_DH_N"/>
    <property type="match status" value="1"/>
</dbReference>
<dbReference type="Pfam" id="PF14765">
    <property type="entry name" value="PS-DH"/>
    <property type="match status" value="1"/>
</dbReference>
<dbReference type="SMART" id="SM00827">
    <property type="entry name" value="PKS_AT"/>
    <property type="match status" value="1"/>
</dbReference>
<dbReference type="SMART" id="SM00826">
    <property type="entry name" value="PKS_DH"/>
    <property type="match status" value="1"/>
</dbReference>
<dbReference type="SMART" id="SM00829">
    <property type="entry name" value="PKS_ER"/>
    <property type="match status" value="1"/>
</dbReference>
<dbReference type="SMART" id="SM00822">
    <property type="entry name" value="PKS_KR"/>
    <property type="match status" value="1"/>
</dbReference>
<dbReference type="SMART" id="SM00825">
    <property type="entry name" value="PKS_KS"/>
    <property type="match status" value="1"/>
</dbReference>
<dbReference type="SMART" id="SM00823">
    <property type="entry name" value="PKS_PP"/>
    <property type="match status" value="1"/>
</dbReference>
<dbReference type="SUPFAM" id="SSF47336">
    <property type="entry name" value="ACP-like"/>
    <property type="match status" value="1"/>
</dbReference>
<dbReference type="SUPFAM" id="SSF52151">
    <property type="entry name" value="FabD/lysophospholipase-like"/>
    <property type="match status" value="1"/>
</dbReference>
<dbReference type="SUPFAM" id="SSF50129">
    <property type="entry name" value="GroES-like"/>
    <property type="match status" value="1"/>
</dbReference>
<dbReference type="SUPFAM" id="SSF51735">
    <property type="entry name" value="NAD(P)-binding Rossmann-fold domains"/>
    <property type="match status" value="2"/>
</dbReference>
<dbReference type="SUPFAM" id="SSF55048">
    <property type="entry name" value="Probable ACP-binding domain of malonyl-CoA ACP transacylase"/>
    <property type="match status" value="1"/>
</dbReference>
<dbReference type="SUPFAM" id="SSF53335">
    <property type="entry name" value="S-adenosyl-L-methionine-dependent methyltransferases"/>
    <property type="match status" value="1"/>
</dbReference>
<dbReference type="SUPFAM" id="SSF53901">
    <property type="entry name" value="Thiolase-like"/>
    <property type="match status" value="1"/>
</dbReference>
<dbReference type="PROSITE" id="PS50075">
    <property type="entry name" value="CARRIER"/>
    <property type="match status" value="1"/>
</dbReference>
<dbReference type="PROSITE" id="PS00606">
    <property type="entry name" value="KS3_1"/>
    <property type="match status" value="1"/>
</dbReference>
<dbReference type="PROSITE" id="PS52004">
    <property type="entry name" value="KS3_2"/>
    <property type="match status" value="1"/>
</dbReference>
<dbReference type="PROSITE" id="PS00012">
    <property type="entry name" value="PHOSPHOPANTETHEINE"/>
    <property type="match status" value="1"/>
</dbReference>
<dbReference type="PROSITE" id="PS52019">
    <property type="entry name" value="PKS_MFAS_DH"/>
    <property type="match status" value="1"/>
</dbReference>
<keyword id="KW-0012">Acyltransferase</keyword>
<keyword id="KW-0489">Methyltransferase</keyword>
<keyword id="KW-0511">Multifunctional enzyme</keyword>
<keyword id="KW-0521">NADP</keyword>
<keyword id="KW-0560">Oxidoreductase</keyword>
<keyword id="KW-0596">Phosphopantetheine</keyword>
<keyword id="KW-0597">Phosphoprotein</keyword>
<keyword id="KW-1185">Reference proteome</keyword>
<keyword id="KW-0808">Transferase</keyword>
<sequence length="2525" mass="274979">MQSDTNNSPLSWEELRSGAASSDANSSPPEPIAIIGMSCRLSGSAQDPSSLWEMLTSGRTAWTPGPGQRFNMEAFQSSSADTFGMTNTGGGHFLKEDVAAFDAAFFGIHAVEAKAIDPQHRLLLEIAYECFDNSGLNMDSLWGSNTGVYVGQWANDYHEIQTRDIDAPPLYLTTGTGPAISSNRISYFFNLRGPSFTVDTGCSSGFVALHQAVQSLRSGETSQCFVGGVNLMLDPQRFVYQSKLKMFSNEGRSFAFDSRANGYGRGEGCTAVMLKPLSAALRDGDQIRAVIRNSVLNQDGRTAGITVPSPEAQEEAILKAYGDAMLELRADYVEAHGTGTKVGDPKEAGAIAAALARGNSPGAALPIGSIKANIGHTESAAGLAGLIKAVLMLEHGIIPPQANYESPNPDLCLEERGLRVPTQLERRTLRRISVNSFGYGGTNAHVVVDASADALCALSSLGRHTSAQRVFFISGASEKACQRICARLAKYLARKSAWPETDTPELLAKLAYTLSKKSIHPYRLALVAQDINELVQQLISAAYSPVARQDRKGDTRIGLVFSGQGSQYAEMGRELLSSSAVFSRSIDRACQHLTELGSGWNMREELCRPQETTRINEPALSQPLTTAIQLALVDLLFDLKISVSAVVGHSSGEIAAAYAAEAISFEDAMTASYYRGSLTSSLVVGNPECDGAMLAVGADADVVNQRISEVGDAHGRMRIACFNSPSSVTVSGDAKAVNELRKLLVAEGTFNRMLPTNGAAYHSHQMESMNKEYTLSLQKKLSPKKKTSISAARIFSSVTGKENDLQTPLDGVYWAANLLSPVLFSQALREMCEAKYDGKALDMIIEVGPHSQLGGAVKQTVKALKSSSGIAYTSVLKKGKKARQAFLECLGALHVCTATVDLNASNGFSATHAPKLLVDLPPYPFDHERSFWHETRISKDYRHRKHAPHELLGTFAHDTNRVEPRWRQFLSLKQTPWLKSHAVQGQIVFPGAGFLTMAIQAMLQHMHATSPLVKVHSLLLRNVSLSRALVLPADGPDVEITLTLRPESHTAKSSSAVWSEFRIFTVTSESVWTEHCRGLVHAETQAADVDEIAADVKDTLEAGETCVHEVTPQKLYHLGSEIGLDWQHPFNNVSNIRTSRDACVAVARKTVLDSDVGGMGDILHPTVLDSCLFHGLSAVLVLERGSTSTFVPNFIEQLQIFNRTPDSSAELLSTSKLSRDTSTCDVVVQEKGCSPGQAVIFAAKGVHTTTLPGDTGLNEVIDDICHSQDWVTYVDAWTPEHCDRFVQKAVKEVDPERVPDGPRRQFFEWMKIYAETPLDEQTLPPASISADHWAFYEGVKRLGPHLADILVEKTDPLALLTPDNLLGQLYNTERCRRCIVQMAEYCHALGQQSPGLKVLEVGAGTASATLPAIEALNGRGSINAHSYTFTDLSPAFFDPAKERLGSFADAVKFDILDIERCPLEQGFQEAGYDLIIASNVIHATQRIDAVLANIKKLLKPGGKFMLMELTVPTPHYNLLFGVFKGWWAGYDEGRQLSPLIPPSEWVTRLTRAKFSPAELWFQDYPEENGGTISVLIASAPWDVAQVELPAIDVVTTEYSALESGDEAVLRTLSSSEELLNTNISVGCLSDISSKDNIVIILPEVARYLCQSLHGSAWERFKHLVLNARAVLLVGCSSSYCSDFVSGGIWLGFARCLRLELPRLRVITLDLAVERALMMKRLTSVLPTLMRSIKQGLALDGRVEVENEFRESDGQLYVSRLVSNDKMSEYVHRSRQRAQPKLLSFMDPQRPMTAELRVPGLLESIRWKDDVKATAVGPDEVKLELRAASINFKDVLIAAGQLEGINEMRNDCSGVVIEVGSNMCDRFKAGDRVCALYSRSYTNYPVVHGDCCQVVPDSMTYEEATALPVVWTTVYYSLVDAGRLEQGDKILIHSAAGAVGQAAIMLAKHIGAEVFATVGNSEKQTLLRERYGIADDHIFSSRTPAFHDKIKRLTGGYGVDVVLNSLAGDQFRHSCNLVAPFGRFVEIGRKDLMDDARMSMGFLLKNVTFAYVDLSLIMEVKRPLARRLLREVVNLAASGAIRPVTLTTLPITEIETAFRMIQAGKHTGKIVLRVAQDQIVKADPPAPAHAELKPNATYLLVGGFGGLGRAVITWMGSRGAKNILVISRSGSPDKQGQILIKDMEAMGVKVVAEKCDVTAEDEVASLSKLAADRGLPPIRGVIHSAMVLQDSVLEEMTADEWCRALAPKYAGSLNLHRSFGNEVDFFIFMSSAVALRGNVGQSNYAAACSFQDALARYRTAAGLPAFSINVGPVREVGFVSENPQVAAALRKQGLGTISMADLLTLLNYAVVHRNPEESVCSIGMLPRDTDESLTDRRFAHLVRHDVVSQTADAGGVQFADIPRLLDGAAPGAQLLENISQLVLMQLSKLIASPVETLSAAQSLDSYGVDSLVAVELRNWVGAYLQANVPLMVLRGTSSIHELAKIIAKESRRPSTLLWRSTLLYSYPDLDKLQHDMPAQISWPANS</sequence>
<organism>
    <name type="scientific">Cordyceps militaris (strain CM01)</name>
    <name type="common">Caterpillar fungus</name>
    <dbReference type="NCBI Taxonomy" id="983644"/>
    <lineage>
        <taxon>Eukaryota</taxon>
        <taxon>Fungi</taxon>
        <taxon>Dikarya</taxon>
        <taxon>Ascomycota</taxon>
        <taxon>Pezizomycotina</taxon>
        <taxon>Sordariomycetes</taxon>
        <taxon>Hypocreomycetidae</taxon>
        <taxon>Hypocreales</taxon>
        <taxon>Cordycipitaceae</taxon>
        <taxon>Cordyceps</taxon>
    </lineage>
</organism>
<comment type="function">
    <text evidence="10 12">Highly reducing polyketide synthase; part of the gene cluster that mediates the biosynthesis of beauveriolides I and III, cyclodepsipeptides acting as inhibitors of the acyl-CoA:cholesterol acyltransferase (PubMed:31926180). The HR-PKS cm3B initiates the biosynthesis of beauveriolides by iteratively catalyzing the formation of the linear polyketide chain (Probable). The ATP-dependent acetyl-CoA ligase cm3D converts the polyketide carboxylic acid to a CoA thioester which id shuttled to the first T domain in the NRPS cm3A by the acetyltransferase cm3C (Probable). Cm3A contains 13 domains and assembles the polyketide chain, L-phenylalanine, L-alanine, and D-leucine (or D-allo-isoleucine) to form beauveriolide I (or beauveriolide III). The production of both beauveriolides I and III suggests the substrate adaptability of cm3B, using different amino acids as substrates (Probable).</text>
</comment>
<comment type="pathway">
    <text evidence="10">Secondary metabolite biosynthesis.</text>
</comment>
<comment type="domain">
    <text evidence="12">Multidomain protein; including a ketosynthase (KS) that catalyzes repeated decarboxylative condensation to elongate the polyketide backbone; a malonyl-CoA:ACP transacylase (MAT) that selects and transfers the extender unit malonyl-CoA; a dehydratase (DH) domain that reduces hydroxyl groups to enoyl groups; a methyltransferase (CMeT) domain responsible for the incorporation of methyl groups; an enoylreductase (ER) domain that reduces enoyl groups to alkyl group; a ketoreductase (KR) domain that catalyzes beta-ketoreduction steps; and an acyl-carrier protein (ACP) that serves as the tether of the growing and completed polyketide via its phosphopantetheinyl arm.</text>
</comment>
<comment type="biotechnology">
    <text evidence="7 8 9">Beauveriolides inhibit selectively the acyl-CoA:cholesterol acyl-transferases (ACATs), leading to blocking the synthesis of cholesteryl esters and decreasing the cholesterol concentration, which suggests that beauveriolides are promising as potential lead compounds for antiatherosclerotic agents (PubMed:14718664, PubMed:19336931). Moreover, this activity correlates with inhibitory activities of beauveriolides in the secretion of amyloid-beta-peptide, which suggests that beauveriolides may be an attractive new candidate for the treatment of Alzheimer's disease (PubMed:19396893).</text>
</comment>
<proteinExistence type="evidence at protein level"/>